<gene>
    <name type="primary">RPL21</name>
    <name evidence="7" type="ORF">EHI_069110</name>
</gene>
<proteinExistence type="evidence at transcript level"/>
<comment type="function">
    <text evidence="1">Component of the large ribosomal subunit. The ribosome is a large ribonucleoprotein complex responsible for the synthesis of proteins in the cell.</text>
</comment>
<comment type="subunit">
    <text evidence="1">Component of the large ribosomal subunit.</text>
</comment>
<comment type="subcellular location">
    <subcellularLocation>
        <location evidence="1">Cytoplasm</location>
        <location evidence="1">Cytosol</location>
    </subcellularLocation>
    <subcellularLocation>
        <location evidence="1">Cytoplasm</location>
    </subcellularLocation>
    <subcellularLocation>
        <location evidence="2">Endoplasmic reticulum</location>
    </subcellularLocation>
</comment>
<comment type="similarity">
    <text evidence="4">Belongs to the eukaryotic ribosomal protein eL21 family.</text>
</comment>
<accession>P38653</accession>
<accession>A0A175JHB7</accession>
<accession>C4LWK0</accession>
<name>RL21_ENTH1</name>
<protein>
    <recommendedName>
        <fullName evidence="4">Large ribosomal subunit protein eL21</fullName>
    </recommendedName>
    <alternativeName>
        <fullName>60S ribosomal protein L21</fullName>
    </alternativeName>
</protein>
<reference evidence="6" key="1">
    <citation type="journal article" date="1994" name="Gene">
        <title>Characterization of two distinct gene transcripts for ribosomal protein L21 from pathogenic and nonpathogenic strains of Entamoeba histolytica.</title>
        <authorList>
            <person name="Petter R."/>
            <person name="Moshitch S."/>
            <person name="Rozenblatt S."/>
            <person name="Nuchamovitz Y."/>
            <person name="Mirelman D."/>
        </authorList>
    </citation>
    <scope>NUCLEOTIDE SEQUENCE [GENOMIC DNA]</scope>
    <source>
        <strain evidence="6">ATCC 30459 / HM-1:IMSS / ABRM</strain>
    </source>
</reference>
<reference evidence="7" key="2">
    <citation type="journal article" date="2005" name="Nature">
        <title>The genome of the protist parasite Entamoeba histolytica.</title>
        <authorList>
            <person name="Loftus B.J."/>
            <person name="Anderson I."/>
            <person name="Davies R."/>
            <person name="Alsmark U.C."/>
            <person name="Samuelson J."/>
            <person name="Amedeo P."/>
            <person name="Roncaglia P."/>
            <person name="Berriman M."/>
            <person name="Hirt R.P."/>
            <person name="Mann B.J."/>
            <person name="Nozaki T."/>
            <person name="Suh B."/>
            <person name="Pop M."/>
            <person name="Duchene M."/>
            <person name="Ackers J."/>
            <person name="Tannich E."/>
            <person name="Leippe M."/>
            <person name="Hofer M."/>
            <person name="Bruchhaus I."/>
            <person name="Willhoeft U."/>
            <person name="Bhattacharya A."/>
            <person name="Chillingworth T."/>
            <person name="Churcher C.M."/>
            <person name="Hance Z."/>
            <person name="Harris B."/>
            <person name="Harris D."/>
            <person name="Jagels K."/>
            <person name="Moule S."/>
            <person name="Mungall K.L."/>
            <person name="Ormond D."/>
            <person name="Squares R."/>
            <person name="Whitehead S."/>
            <person name="Quail M.A."/>
            <person name="Rabbinowitsch E."/>
            <person name="Norbertczak H."/>
            <person name="Price C."/>
            <person name="Wang Z."/>
            <person name="Guillen N."/>
            <person name="Gilchrist C."/>
            <person name="Stroup S.E."/>
            <person name="Bhattacharya S."/>
            <person name="Lohia A."/>
            <person name="Foster P.G."/>
            <person name="Sicheritz-Ponten T."/>
            <person name="Weber C."/>
            <person name="Singh U."/>
            <person name="Mukherjee C."/>
            <person name="El-Sayed N.M.A."/>
            <person name="Petri W.A."/>
            <person name="Clark C.G."/>
            <person name="Embley T.M."/>
            <person name="Barrell B.G."/>
            <person name="Fraser C.M."/>
            <person name="Hall N."/>
        </authorList>
    </citation>
    <scope>NUCLEOTIDE SEQUENCE [LARGE SCALE GENOMIC DNA]</scope>
    <source>
        <strain evidence="7">ATCC 30459 / HM-1:IMSS / ABRM</strain>
    </source>
</reference>
<reference evidence="5" key="3">
    <citation type="journal article" date="1992" name="Mol. Biochem. Parasitol.">
        <title>Linkage between actin and ribosomal protein L21 genes in Entamoeba histolytica.</title>
        <authorList>
            <person name="Petter R."/>
            <person name="Rozenblatt S."/>
            <person name="Nuchamowitz Y."/>
            <person name="Mirelman D."/>
        </authorList>
    </citation>
    <scope>NUCLEOTIDE SEQUENCE [MRNA] OF 4-165</scope>
    <scope>VARIANTS ASP-113 AND THR-116</scope>
    <source>
        <strain evidence="5">200:NIH</strain>
    </source>
</reference>
<feature type="chain" id="PRO_0000149676" description="Large ribosomal subunit protein eL21">
    <location>
        <begin position="1"/>
        <end position="166"/>
    </location>
</feature>
<feature type="sequence variant" description="In strain: 200:NIH." evidence="3">
    <original>A</original>
    <variation>D</variation>
    <location>
        <position position="113"/>
    </location>
</feature>
<feature type="sequence variant" description="In strain: 200:NIH." evidence="3">
    <original>R</original>
    <variation>T</variation>
    <location>
        <position position="116"/>
    </location>
</feature>
<organism evidence="7">
    <name type="scientific">Entamoeba histolytica (strain ATCC 30459 / HM-1:IMSS / ABRM)</name>
    <dbReference type="NCBI Taxonomy" id="294381"/>
    <lineage>
        <taxon>Eukaryota</taxon>
        <taxon>Amoebozoa</taxon>
        <taxon>Evosea</taxon>
        <taxon>Archamoebae</taxon>
        <taxon>Mastigamoebida</taxon>
        <taxon>Entamoebidae</taxon>
        <taxon>Entamoeba</taxon>
    </lineage>
</organism>
<dbReference type="EMBL" id="X73634">
    <property type="protein sequence ID" value="CAA52014.1"/>
    <property type="molecule type" value="Genomic_DNA"/>
</dbReference>
<dbReference type="EMBL" id="DS571164">
    <property type="protein sequence ID" value="EAL49885.1"/>
    <property type="molecule type" value="Genomic_DNA"/>
</dbReference>
<dbReference type="EMBL" id="M92098">
    <property type="protein sequence ID" value="AAA29116.1"/>
    <property type="molecule type" value="mRNA"/>
</dbReference>
<dbReference type="PIR" id="A48465">
    <property type="entry name" value="A48465"/>
</dbReference>
<dbReference type="RefSeq" id="XP_655273.1">
    <property type="nucleotide sequence ID" value="XM_650181.2"/>
</dbReference>
<dbReference type="SMR" id="P38653"/>
<dbReference type="STRING" id="5759.C4LWK0"/>
<dbReference type="EnsemblProtists" id="GAT93089">
    <property type="protein sequence ID" value="GAT93089"/>
    <property type="gene ID" value="CL6EHI_069110"/>
</dbReference>
<dbReference type="EnsemblProtists" id="rna_EHI_069110-1">
    <property type="protein sequence ID" value="rna_EHI_069110-1"/>
    <property type="gene ID" value="EHI_069110"/>
</dbReference>
<dbReference type="GeneID" id="3409589"/>
<dbReference type="KEGG" id="ehi:EHI_069110"/>
<dbReference type="VEuPathDB" id="AmoebaDB:EHI5A_114690"/>
<dbReference type="VEuPathDB" id="AmoebaDB:EHI_069110"/>
<dbReference type="VEuPathDB" id="AmoebaDB:KM1_310370"/>
<dbReference type="eggNOG" id="KOG1732">
    <property type="taxonomic scope" value="Eukaryota"/>
</dbReference>
<dbReference type="HOGENOM" id="CLU_103610_0_1_1"/>
<dbReference type="OMA" id="HVQASRC"/>
<dbReference type="OrthoDB" id="1539250at2759"/>
<dbReference type="Proteomes" id="UP000001926">
    <property type="component" value="Partially assembled WGS sequence"/>
</dbReference>
<dbReference type="GO" id="GO:0022625">
    <property type="term" value="C:cytosolic large ribosomal subunit"/>
    <property type="evidence" value="ECO:0000318"/>
    <property type="project" value="GO_Central"/>
</dbReference>
<dbReference type="GO" id="GO:0005783">
    <property type="term" value="C:endoplasmic reticulum"/>
    <property type="evidence" value="ECO:0007669"/>
    <property type="project" value="UniProtKB-SubCell"/>
</dbReference>
<dbReference type="GO" id="GO:0003735">
    <property type="term" value="F:structural constituent of ribosome"/>
    <property type="evidence" value="ECO:0000318"/>
    <property type="project" value="GO_Central"/>
</dbReference>
<dbReference type="GO" id="GO:0006412">
    <property type="term" value="P:translation"/>
    <property type="evidence" value="ECO:0007669"/>
    <property type="project" value="InterPro"/>
</dbReference>
<dbReference type="FunFam" id="2.30.30.70:FF:000001">
    <property type="entry name" value="60S ribosomal protein L21"/>
    <property type="match status" value="1"/>
</dbReference>
<dbReference type="Gene3D" id="6.10.250.3260">
    <property type="match status" value="1"/>
</dbReference>
<dbReference type="Gene3D" id="2.30.30.70">
    <property type="entry name" value="Ribosomal protein L21"/>
    <property type="match status" value="1"/>
</dbReference>
<dbReference type="InterPro" id="IPR001147">
    <property type="entry name" value="Ribosomal_eL21"/>
</dbReference>
<dbReference type="InterPro" id="IPR018259">
    <property type="entry name" value="Ribosomal_eL21_CS"/>
</dbReference>
<dbReference type="InterPro" id="IPR036948">
    <property type="entry name" value="Ribosomal_eL21_sf"/>
</dbReference>
<dbReference type="InterPro" id="IPR008991">
    <property type="entry name" value="Translation_prot_SH3-like_sf"/>
</dbReference>
<dbReference type="PANTHER" id="PTHR20981">
    <property type="entry name" value="60S RIBOSOMAL PROTEIN L21"/>
    <property type="match status" value="1"/>
</dbReference>
<dbReference type="Pfam" id="PF01157">
    <property type="entry name" value="Ribosomal_L21e"/>
    <property type="match status" value="1"/>
</dbReference>
<dbReference type="SUPFAM" id="SSF50104">
    <property type="entry name" value="Translation proteins SH3-like domain"/>
    <property type="match status" value="1"/>
</dbReference>
<dbReference type="PROSITE" id="PS01171">
    <property type="entry name" value="RIBOSOMAL_L21E"/>
    <property type="match status" value="1"/>
</dbReference>
<evidence type="ECO:0000250" key="1">
    <source>
        <dbReference type="UniProtKB" id="P46778"/>
    </source>
</evidence>
<evidence type="ECO:0000250" key="2">
    <source>
        <dbReference type="UniProtKB" id="P49666"/>
    </source>
</evidence>
<evidence type="ECO:0000269" key="3">
    <source>
    </source>
</evidence>
<evidence type="ECO:0000305" key="4"/>
<evidence type="ECO:0000312" key="5">
    <source>
        <dbReference type="EMBL" id="AAA29116.1"/>
    </source>
</evidence>
<evidence type="ECO:0000312" key="6">
    <source>
        <dbReference type="EMBL" id="CAA52014.1"/>
    </source>
</evidence>
<evidence type="ECO:0000312" key="7">
    <source>
        <dbReference type="EMBL" id="EAL49885.1"/>
    </source>
</evidence>
<sequence>MPLSNGRNRRTRKLFKRPFRGHGLSNTSTILHTYKVGDYVTILCNSSIQHGLPYKAFHGKTGRVWNVNPHAIGVMVNKKVNNRIVVKRLHISPEHIRPSGCQKDFLERKAAVAAIRKQNIQLKKEGKPLLPLPAKRLPKQPRPAELIKGADIKFTTVAPLKFEELY</sequence>
<keyword id="KW-0963">Cytoplasm</keyword>
<keyword id="KW-0256">Endoplasmic reticulum</keyword>
<keyword id="KW-1185">Reference proteome</keyword>
<keyword id="KW-0687">Ribonucleoprotein</keyword>
<keyword id="KW-0689">Ribosomal protein</keyword>